<reference key="1">
    <citation type="journal article" date="2002" name="J. Bacteriol.">
        <title>Whole-genome comparison of Mycobacterium tuberculosis clinical and laboratory strains.</title>
        <authorList>
            <person name="Fleischmann R.D."/>
            <person name="Alland D."/>
            <person name="Eisen J.A."/>
            <person name="Carpenter L."/>
            <person name="White O."/>
            <person name="Peterson J.D."/>
            <person name="DeBoy R.T."/>
            <person name="Dodson R.J."/>
            <person name="Gwinn M.L."/>
            <person name="Haft D.H."/>
            <person name="Hickey E.K."/>
            <person name="Kolonay J.F."/>
            <person name="Nelson W.C."/>
            <person name="Umayam L.A."/>
            <person name="Ermolaeva M.D."/>
            <person name="Salzberg S.L."/>
            <person name="Delcher A."/>
            <person name="Utterback T.R."/>
            <person name="Weidman J.F."/>
            <person name="Khouri H.M."/>
            <person name="Gill J."/>
            <person name="Mikula A."/>
            <person name="Bishai W."/>
            <person name="Jacobs W.R. Jr."/>
            <person name="Venter J.C."/>
            <person name="Fraser C.M."/>
        </authorList>
    </citation>
    <scope>NUCLEOTIDE SEQUENCE [LARGE SCALE GENOMIC DNA]</scope>
    <source>
        <strain>CDC 1551 / Oshkosh</strain>
    </source>
</reference>
<name>PE15_MYCTO</name>
<protein>
    <recommendedName>
        <fullName evidence="1">PE family immunomodulator PE15</fullName>
    </recommendedName>
</protein>
<evidence type="ECO:0000250" key="1">
    <source>
        <dbReference type="UniProtKB" id="P9WIH1"/>
    </source>
</evidence>
<evidence type="ECO:0000255" key="2"/>
<evidence type="ECO:0000305" key="3"/>
<dbReference type="EMBL" id="AE000516">
    <property type="protein sequence ID" value="AAK45695.1"/>
    <property type="molecule type" value="Genomic_DNA"/>
</dbReference>
<dbReference type="PIR" id="H70898">
    <property type="entry name" value="H70898"/>
</dbReference>
<dbReference type="RefSeq" id="WP_003407225.1">
    <property type="nucleotide sequence ID" value="NZ_KK341227.1"/>
</dbReference>
<dbReference type="SMR" id="P9WIH0"/>
<dbReference type="KEGG" id="mtc:MT1430"/>
<dbReference type="PATRIC" id="fig|83331.31.peg.1536"/>
<dbReference type="HOGENOM" id="CLU_162350_0_0_11"/>
<dbReference type="Proteomes" id="UP000001020">
    <property type="component" value="Chromosome"/>
</dbReference>
<dbReference type="GO" id="GO:0030313">
    <property type="term" value="C:cell envelope"/>
    <property type="evidence" value="ECO:0007669"/>
    <property type="project" value="UniProtKB-SubCell"/>
</dbReference>
<dbReference type="GO" id="GO:0009986">
    <property type="term" value="C:cell surface"/>
    <property type="evidence" value="ECO:0007669"/>
    <property type="project" value="UniProtKB-SubCell"/>
</dbReference>
<dbReference type="GO" id="GO:0005576">
    <property type="term" value="C:extracellular region"/>
    <property type="evidence" value="ECO:0007669"/>
    <property type="project" value="UniProtKB-SubCell"/>
</dbReference>
<dbReference type="FunFam" id="1.10.287.850:FF:000002">
    <property type="entry name" value="PE family immunomodulator PE15"/>
    <property type="match status" value="1"/>
</dbReference>
<dbReference type="Gene3D" id="1.10.287.850">
    <property type="entry name" value="HP0062-like domain"/>
    <property type="match status" value="1"/>
</dbReference>
<dbReference type="InterPro" id="IPR000084">
    <property type="entry name" value="PE-PGRS_N"/>
</dbReference>
<dbReference type="Pfam" id="PF00934">
    <property type="entry name" value="PE"/>
    <property type="match status" value="1"/>
</dbReference>
<dbReference type="SUPFAM" id="SSF140459">
    <property type="entry name" value="PE/PPE dimer-like"/>
    <property type="match status" value="1"/>
</dbReference>
<organism>
    <name type="scientific">Mycobacterium tuberculosis (strain CDC 1551 / Oshkosh)</name>
    <dbReference type="NCBI Taxonomy" id="83331"/>
    <lineage>
        <taxon>Bacteria</taxon>
        <taxon>Bacillati</taxon>
        <taxon>Actinomycetota</taxon>
        <taxon>Actinomycetes</taxon>
        <taxon>Mycobacteriales</taxon>
        <taxon>Mycobacteriaceae</taxon>
        <taxon>Mycobacterium</taxon>
        <taxon>Mycobacterium tuberculosis complex</taxon>
    </lineage>
</organism>
<feature type="chain" id="PRO_0000428008" description="PE family immunomodulator PE15">
    <location>
        <begin position="1"/>
        <end position="102"/>
    </location>
</feature>
<feature type="domain" description="PE" evidence="2">
    <location>
        <begin position="3"/>
        <end position="91"/>
    </location>
</feature>
<accession>P9WIH0</accession>
<accession>L0T842</accession>
<accession>P0A682</accession>
<accession>P71656</accession>
<proteinExistence type="inferred from homology"/>
<sequence>MTLRVVPESLAGASAAIEAVTARLAAAHAAAAPFIAAVIPPGSDSVSVCNAVEFSVHGSQHVAMAAQGVEELGRSGVGVAESGASYAARDALAAASYLSGGL</sequence>
<gene>
    <name type="primary">PE15</name>
    <name type="ordered locus">MT1430</name>
</gene>
<keyword id="KW-1185">Reference proteome</keyword>
<keyword id="KW-0964">Secreted</keyword>
<keyword id="KW-0843">Virulence</keyword>
<comment type="function">
    <text evidence="1">May play a pivotal role in the evasion of host immune response by M.tuberculosis. Mediates production of IL-10 via activation of the p38 and ERK1/2 mitogen-activated protein kinase (MAPK) signaling pathways.</text>
</comment>
<comment type="subcellular location">
    <subcellularLocation>
        <location evidence="1">Secreted</location>
    </subcellularLocation>
    <subcellularLocation>
        <location evidence="1">Cell envelope</location>
    </subcellularLocation>
    <subcellularLocation>
        <location evidence="1">Cell surface</location>
    </subcellularLocation>
    <text evidence="1">Secreted via the ESX-3 / type VII secretion system (T7SS) (By similarity). Secretion is dependent on EsxG and EsxH (By similarity).</text>
</comment>
<comment type="similarity">
    <text evidence="3">Belongs to the mycobacterial PE family.</text>
</comment>